<evidence type="ECO:0000255" key="1">
    <source>
        <dbReference type="HAMAP-Rule" id="MF_00185"/>
    </source>
</evidence>
<dbReference type="EC" id="2.5.1.75" evidence="1"/>
<dbReference type="EMBL" id="FM954972">
    <property type="protein sequence ID" value="CAV17291.1"/>
    <property type="molecule type" value="Genomic_DNA"/>
</dbReference>
<dbReference type="SMR" id="B7VI54"/>
<dbReference type="STRING" id="575788.VS_0269"/>
<dbReference type="KEGG" id="vsp:VS_0269"/>
<dbReference type="eggNOG" id="COG0324">
    <property type="taxonomic scope" value="Bacteria"/>
</dbReference>
<dbReference type="HOGENOM" id="CLU_032616_0_0_6"/>
<dbReference type="Proteomes" id="UP000009100">
    <property type="component" value="Chromosome 1"/>
</dbReference>
<dbReference type="GO" id="GO:0005524">
    <property type="term" value="F:ATP binding"/>
    <property type="evidence" value="ECO:0007669"/>
    <property type="project" value="UniProtKB-UniRule"/>
</dbReference>
<dbReference type="GO" id="GO:0052381">
    <property type="term" value="F:tRNA dimethylallyltransferase activity"/>
    <property type="evidence" value="ECO:0007669"/>
    <property type="project" value="UniProtKB-UniRule"/>
</dbReference>
<dbReference type="GO" id="GO:0006400">
    <property type="term" value="P:tRNA modification"/>
    <property type="evidence" value="ECO:0007669"/>
    <property type="project" value="TreeGrafter"/>
</dbReference>
<dbReference type="FunFam" id="1.10.20.140:FF:000001">
    <property type="entry name" value="tRNA dimethylallyltransferase"/>
    <property type="match status" value="1"/>
</dbReference>
<dbReference type="Gene3D" id="1.10.20.140">
    <property type="match status" value="1"/>
</dbReference>
<dbReference type="Gene3D" id="3.40.50.300">
    <property type="entry name" value="P-loop containing nucleotide triphosphate hydrolases"/>
    <property type="match status" value="1"/>
</dbReference>
<dbReference type="HAMAP" id="MF_00185">
    <property type="entry name" value="IPP_trans"/>
    <property type="match status" value="1"/>
</dbReference>
<dbReference type="InterPro" id="IPR039657">
    <property type="entry name" value="Dimethylallyltransferase"/>
</dbReference>
<dbReference type="InterPro" id="IPR018022">
    <property type="entry name" value="IPT"/>
</dbReference>
<dbReference type="InterPro" id="IPR027417">
    <property type="entry name" value="P-loop_NTPase"/>
</dbReference>
<dbReference type="NCBIfam" id="TIGR00174">
    <property type="entry name" value="miaA"/>
    <property type="match status" value="1"/>
</dbReference>
<dbReference type="PANTHER" id="PTHR11088">
    <property type="entry name" value="TRNA DIMETHYLALLYLTRANSFERASE"/>
    <property type="match status" value="1"/>
</dbReference>
<dbReference type="PANTHER" id="PTHR11088:SF60">
    <property type="entry name" value="TRNA DIMETHYLALLYLTRANSFERASE"/>
    <property type="match status" value="1"/>
</dbReference>
<dbReference type="Pfam" id="PF01715">
    <property type="entry name" value="IPPT"/>
    <property type="match status" value="1"/>
</dbReference>
<dbReference type="SUPFAM" id="SSF52540">
    <property type="entry name" value="P-loop containing nucleoside triphosphate hydrolases"/>
    <property type="match status" value="1"/>
</dbReference>
<reference key="1">
    <citation type="submission" date="2009-02" db="EMBL/GenBank/DDBJ databases">
        <title>Vibrio splendidus str. LGP32 complete genome.</title>
        <authorList>
            <person name="Mazel D."/>
            <person name="Le Roux F."/>
        </authorList>
    </citation>
    <scope>NUCLEOTIDE SEQUENCE [LARGE SCALE GENOMIC DNA]</scope>
    <source>
        <strain>LGP32</strain>
    </source>
</reference>
<feature type="chain" id="PRO_0000377367" description="tRNA dimethylallyltransferase">
    <location>
        <begin position="1"/>
        <end position="310"/>
    </location>
</feature>
<feature type="region of interest" description="Interaction with substrate tRNA" evidence="1">
    <location>
        <begin position="38"/>
        <end position="41"/>
    </location>
</feature>
<feature type="region of interest" description="Interaction with substrate tRNA" evidence="1">
    <location>
        <begin position="162"/>
        <end position="166"/>
    </location>
</feature>
<feature type="region of interest" description="Interaction with substrate tRNA" evidence="1">
    <location>
        <begin position="243"/>
        <end position="248"/>
    </location>
</feature>
<feature type="region of interest" description="Interaction with substrate tRNA" evidence="1">
    <location>
        <begin position="276"/>
        <end position="283"/>
    </location>
</feature>
<feature type="binding site" evidence="1">
    <location>
        <begin position="13"/>
        <end position="20"/>
    </location>
    <ligand>
        <name>ATP</name>
        <dbReference type="ChEBI" id="CHEBI:30616"/>
    </ligand>
</feature>
<feature type="binding site" evidence="1">
    <location>
        <begin position="15"/>
        <end position="20"/>
    </location>
    <ligand>
        <name>substrate</name>
    </ligand>
</feature>
<feature type="site" description="Interaction with substrate tRNA" evidence="1">
    <location>
        <position position="104"/>
    </location>
</feature>
<feature type="site" description="Interaction with substrate tRNA" evidence="1">
    <location>
        <position position="126"/>
    </location>
</feature>
<proteinExistence type="inferred from homology"/>
<gene>
    <name evidence="1" type="primary">miaA</name>
    <name type="ordered locus">VS_0269</name>
</gene>
<keyword id="KW-0067">ATP-binding</keyword>
<keyword id="KW-0460">Magnesium</keyword>
<keyword id="KW-0547">Nucleotide-binding</keyword>
<keyword id="KW-0808">Transferase</keyword>
<keyword id="KW-0819">tRNA processing</keyword>
<name>MIAA_VIBA3</name>
<accession>B7VI54</accession>
<comment type="function">
    <text evidence="1">Catalyzes the transfer of a dimethylallyl group onto the adenine at position 37 in tRNAs that read codons beginning with uridine, leading to the formation of N6-(dimethylallyl)adenosine (i(6)A).</text>
</comment>
<comment type="catalytic activity">
    <reaction evidence="1">
        <text>adenosine(37) in tRNA + dimethylallyl diphosphate = N(6)-dimethylallyladenosine(37) in tRNA + diphosphate</text>
        <dbReference type="Rhea" id="RHEA:26482"/>
        <dbReference type="Rhea" id="RHEA-COMP:10162"/>
        <dbReference type="Rhea" id="RHEA-COMP:10375"/>
        <dbReference type="ChEBI" id="CHEBI:33019"/>
        <dbReference type="ChEBI" id="CHEBI:57623"/>
        <dbReference type="ChEBI" id="CHEBI:74411"/>
        <dbReference type="ChEBI" id="CHEBI:74415"/>
        <dbReference type="EC" id="2.5.1.75"/>
    </reaction>
</comment>
<comment type="cofactor">
    <cofactor evidence="1">
        <name>Mg(2+)</name>
        <dbReference type="ChEBI" id="CHEBI:18420"/>
    </cofactor>
</comment>
<comment type="subunit">
    <text evidence="1">Monomer.</text>
</comment>
<comment type="similarity">
    <text evidence="1">Belongs to the IPP transferase family.</text>
</comment>
<sequence length="310" mass="35180">MTEKLPLALFLMGPTASGKTDLAIRLRQKYPVEIISVDSALIYKDMDIGTAKPDAGELALAPHRLIDILDPSEAYSAADFRRDAISEMNKIVAEGKIPLLVGGTMLYYKALLEGLSPLPAADQEIRKQIEAESIEQGWQALHDQLREIDPVSAERIHPNDPQRLSRALEVYRISGKTLTELTQTKGDSLPFRVKQFAIAPKERKELHRRIELRFEKMIEAGFEDEMKALYAREDLHPELPSIRCVGYRQMWDYLDGNCDLDEAVFRGVCATRQLAKRQITWLRSWDDLTWLDSENIEQALETLSDAIASD</sequence>
<organism>
    <name type="scientific">Vibrio atlanticus (strain LGP32)</name>
    <name type="common">Vibrio splendidus (strain Mel32)</name>
    <dbReference type="NCBI Taxonomy" id="575788"/>
    <lineage>
        <taxon>Bacteria</taxon>
        <taxon>Pseudomonadati</taxon>
        <taxon>Pseudomonadota</taxon>
        <taxon>Gammaproteobacteria</taxon>
        <taxon>Vibrionales</taxon>
        <taxon>Vibrionaceae</taxon>
        <taxon>Vibrio</taxon>
    </lineage>
</organism>
<protein>
    <recommendedName>
        <fullName evidence="1">tRNA dimethylallyltransferase</fullName>
        <ecNumber evidence="1">2.5.1.75</ecNumber>
    </recommendedName>
    <alternativeName>
        <fullName evidence="1">Dimethylallyl diphosphate:tRNA dimethylallyltransferase</fullName>
        <shortName evidence="1">DMAPP:tRNA dimethylallyltransferase</shortName>
        <shortName evidence="1">DMATase</shortName>
    </alternativeName>
    <alternativeName>
        <fullName evidence="1">Isopentenyl-diphosphate:tRNA isopentenyltransferase</fullName>
        <shortName evidence="1">IPP transferase</shortName>
        <shortName evidence="1">IPPT</shortName>
        <shortName evidence="1">IPTase</shortName>
    </alternativeName>
</protein>